<feature type="chain" id="PRO_0000089868" description="Chemolithotroph-specific protein">
    <location>
        <begin position="1"/>
        <end position="8" status="greater than"/>
    </location>
</feature>
<feature type="non-terminal residue">
    <location>
        <position position="8"/>
    </location>
</feature>
<comment type="miscellaneous">
    <text>Found specifically in cells cultured chemolithotrophically.</text>
</comment>
<reference key="1">
    <citation type="submission" date="1995-09" db="UniProtKB">
        <authorList>
            <person name="Marin I."/>
            <person name="Amaro A.M."/>
            <person name="Jerez C.A."/>
            <person name="Amils R."/>
            <person name="Abad J.P."/>
        </authorList>
    </citation>
    <scope>PROTEIN SEQUENCE</scope>
    <source>
        <strain>DSM 5494</strain>
    </source>
</reference>
<protein>
    <recommendedName>
        <fullName>Chemolithotroph-specific protein</fullName>
    </recommendedName>
</protein>
<organism>
    <name type="scientific">Thiomonas delicata</name>
    <name type="common">Thiomonas cuprina</name>
    <dbReference type="NCBI Taxonomy" id="364030"/>
    <lineage>
        <taxon>Bacteria</taxon>
        <taxon>Pseudomonadati</taxon>
        <taxon>Pseudomonadota</taxon>
        <taxon>Betaproteobacteria</taxon>
        <taxon>Burkholderiales</taxon>
        <taxon>Thiomonas</taxon>
    </lineage>
</organism>
<proteinExistence type="evidence at protein level"/>
<keyword id="KW-0903">Direct protein sequencing</keyword>
<sequence length="8" mass="785">APVAQEGN</sequence>
<name>CLP_THIDL</name>
<accession>P80488</accession>